<name>MUTL_THET2</name>
<protein>
    <recommendedName>
        <fullName evidence="1">DNA mismatch repair protein MutL</fullName>
    </recommendedName>
</protein>
<accession>Q72J22</accession>
<gene>
    <name evidence="1" type="primary">mutL</name>
    <name type="ordered locus">TT_C0959</name>
</gene>
<keyword id="KW-0227">DNA damage</keyword>
<keyword id="KW-0234">DNA repair</keyword>
<sequence>MIRPLPPELRGLLARGEVLLTVKDAVRELLENALDAGARRVRVELWGGGLKRLVVEDDGEGIPLEDLPLAVEPYATSKLQDLEGIRTLGFRGQALYALRQAARLRIRSRPRGQLGGGLLLAEGERVEVRPVPAPPGTRVEVEGLFLGEGRDPKGEVRGVLELLKRYLLHHPRLALALFAEGEARLLFPGAGLEEAARLAFGRLLAKRLLPLAYGAGGLEVQGLVSRPEVSRTRPDRLFLAVNGRPVAFPEGLLRRVRRAYRELLPEGHYPVGVLNLFLPQEAFRLRLDARKEEVVLSEEAEALVEEALLALFRRENLARALPEPKPLQPLSPPTASGLPRLRFLAQFRESYLLAEAGDTLYVVDQHAAHERILYEDLLKRVAEGPKPLPRPLLVLLAPEEEALLEAGQEALAALFRWEPFGPGRVRLLMAPAFLHPYPLLLPEVFKEALRGEGRSLKALLARLACLPAVKAGHPLGEAQGQALLDALLTCETPWACPHGRPVLLALKEEDLIRRFGRRSGARGGGEARPRPQEESFPEAPLPREP</sequence>
<reference key="1">
    <citation type="journal article" date="2004" name="Nat. Biotechnol.">
        <title>The genome sequence of the extreme thermophile Thermus thermophilus.</title>
        <authorList>
            <person name="Henne A."/>
            <person name="Brueggemann H."/>
            <person name="Raasch C."/>
            <person name="Wiezer A."/>
            <person name="Hartsch T."/>
            <person name="Liesegang H."/>
            <person name="Johann A."/>
            <person name="Lienard T."/>
            <person name="Gohl O."/>
            <person name="Martinez-Arias R."/>
            <person name="Jacobi C."/>
            <person name="Starkuviene V."/>
            <person name="Schlenczeck S."/>
            <person name="Dencker S."/>
            <person name="Huber R."/>
            <person name="Klenk H.-P."/>
            <person name="Kramer W."/>
            <person name="Merkl R."/>
            <person name="Gottschalk G."/>
            <person name="Fritz H.-J."/>
        </authorList>
    </citation>
    <scope>NUCLEOTIDE SEQUENCE [LARGE SCALE GENOMIC DNA]</scope>
    <source>
        <strain>ATCC BAA-163 / DSM 7039 / HB27</strain>
    </source>
</reference>
<feature type="chain" id="PRO_1000010099" description="DNA mismatch repair protein MutL">
    <location>
        <begin position="1"/>
        <end position="545"/>
    </location>
</feature>
<feature type="region of interest" description="Disordered" evidence="2">
    <location>
        <begin position="516"/>
        <end position="545"/>
    </location>
</feature>
<dbReference type="EMBL" id="AE017221">
    <property type="protein sequence ID" value="AAS81301.1"/>
    <property type="molecule type" value="Genomic_DNA"/>
</dbReference>
<dbReference type="RefSeq" id="WP_011173380.1">
    <property type="nucleotide sequence ID" value="NC_005835.1"/>
</dbReference>
<dbReference type="SMR" id="Q72J22"/>
<dbReference type="KEGG" id="tth:TT_C0959"/>
<dbReference type="eggNOG" id="COG0323">
    <property type="taxonomic scope" value="Bacteria"/>
</dbReference>
<dbReference type="HOGENOM" id="CLU_004131_4_1_0"/>
<dbReference type="OrthoDB" id="9763467at2"/>
<dbReference type="Proteomes" id="UP000000592">
    <property type="component" value="Chromosome"/>
</dbReference>
<dbReference type="GO" id="GO:0032300">
    <property type="term" value="C:mismatch repair complex"/>
    <property type="evidence" value="ECO:0007669"/>
    <property type="project" value="InterPro"/>
</dbReference>
<dbReference type="GO" id="GO:0005524">
    <property type="term" value="F:ATP binding"/>
    <property type="evidence" value="ECO:0007669"/>
    <property type="project" value="InterPro"/>
</dbReference>
<dbReference type="GO" id="GO:0016887">
    <property type="term" value="F:ATP hydrolysis activity"/>
    <property type="evidence" value="ECO:0007669"/>
    <property type="project" value="InterPro"/>
</dbReference>
<dbReference type="GO" id="GO:0140664">
    <property type="term" value="F:ATP-dependent DNA damage sensor activity"/>
    <property type="evidence" value="ECO:0007669"/>
    <property type="project" value="InterPro"/>
</dbReference>
<dbReference type="GO" id="GO:0030983">
    <property type="term" value="F:mismatched DNA binding"/>
    <property type="evidence" value="ECO:0007669"/>
    <property type="project" value="InterPro"/>
</dbReference>
<dbReference type="GO" id="GO:0006298">
    <property type="term" value="P:mismatch repair"/>
    <property type="evidence" value="ECO:0007669"/>
    <property type="project" value="UniProtKB-UniRule"/>
</dbReference>
<dbReference type="CDD" id="cd16926">
    <property type="entry name" value="HATPase_MutL-MLH-PMS-like"/>
    <property type="match status" value="1"/>
</dbReference>
<dbReference type="CDD" id="cd00782">
    <property type="entry name" value="MutL_Trans"/>
    <property type="match status" value="1"/>
</dbReference>
<dbReference type="Gene3D" id="3.30.230.10">
    <property type="match status" value="1"/>
</dbReference>
<dbReference type="Gene3D" id="3.30.565.10">
    <property type="entry name" value="Histidine kinase-like ATPase, C-terminal domain"/>
    <property type="match status" value="1"/>
</dbReference>
<dbReference type="Gene3D" id="3.30.1540.20">
    <property type="entry name" value="MutL, C-terminal domain, dimerisation subdomain"/>
    <property type="match status" value="1"/>
</dbReference>
<dbReference type="Gene3D" id="3.30.1370.100">
    <property type="entry name" value="MutL, C-terminal domain, regulatory subdomain"/>
    <property type="match status" value="1"/>
</dbReference>
<dbReference type="HAMAP" id="MF_00149">
    <property type="entry name" value="DNA_mis_repair"/>
    <property type="match status" value="1"/>
</dbReference>
<dbReference type="InterPro" id="IPR020667">
    <property type="entry name" value="DNA_mismatch_repair_MutL"/>
</dbReference>
<dbReference type="InterPro" id="IPR013507">
    <property type="entry name" value="DNA_mismatch_S5_2-like"/>
</dbReference>
<dbReference type="InterPro" id="IPR036890">
    <property type="entry name" value="HATPase_C_sf"/>
</dbReference>
<dbReference type="InterPro" id="IPR002099">
    <property type="entry name" value="MutL/Mlh/PMS"/>
</dbReference>
<dbReference type="InterPro" id="IPR038973">
    <property type="entry name" value="MutL/Mlh/Pms-like"/>
</dbReference>
<dbReference type="InterPro" id="IPR014790">
    <property type="entry name" value="MutL_C"/>
</dbReference>
<dbReference type="InterPro" id="IPR042120">
    <property type="entry name" value="MutL_C_dimsub"/>
</dbReference>
<dbReference type="InterPro" id="IPR042121">
    <property type="entry name" value="MutL_C_regsub"/>
</dbReference>
<dbReference type="InterPro" id="IPR037198">
    <property type="entry name" value="MutL_C_sf"/>
</dbReference>
<dbReference type="InterPro" id="IPR020568">
    <property type="entry name" value="Ribosomal_Su5_D2-typ_SF"/>
</dbReference>
<dbReference type="InterPro" id="IPR014721">
    <property type="entry name" value="Ribsml_uS5_D2-typ_fold_subgr"/>
</dbReference>
<dbReference type="NCBIfam" id="TIGR00585">
    <property type="entry name" value="mutl"/>
    <property type="match status" value="1"/>
</dbReference>
<dbReference type="PANTHER" id="PTHR10073">
    <property type="entry name" value="DNA MISMATCH REPAIR PROTEIN MLH, PMS, MUTL"/>
    <property type="match status" value="1"/>
</dbReference>
<dbReference type="PANTHER" id="PTHR10073:SF12">
    <property type="entry name" value="DNA MISMATCH REPAIR PROTEIN MLH1"/>
    <property type="match status" value="1"/>
</dbReference>
<dbReference type="Pfam" id="PF01119">
    <property type="entry name" value="DNA_mis_repair"/>
    <property type="match status" value="1"/>
</dbReference>
<dbReference type="Pfam" id="PF02518">
    <property type="entry name" value="HATPase_c"/>
    <property type="match status" value="1"/>
</dbReference>
<dbReference type="Pfam" id="PF08676">
    <property type="entry name" value="MutL_C"/>
    <property type="match status" value="1"/>
</dbReference>
<dbReference type="SMART" id="SM01340">
    <property type="entry name" value="DNA_mis_repair"/>
    <property type="match status" value="1"/>
</dbReference>
<dbReference type="SMART" id="SM00853">
    <property type="entry name" value="MutL_C"/>
    <property type="match status" value="1"/>
</dbReference>
<dbReference type="SUPFAM" id="SSF55874">
    <property type="entry name" value="ATPase domain of HSP90 chaperone/DNA topoisomerase II/histidine kinase"/>
    <property type="match status" value="1"/>
</dbReference>
<dbReference type="SUPFAM" id="SSF118116">
    <property type="entry name" value="DNA mismatch repair protein MutL"/>
    <property type="match status" value="1"/>
</dbReference>
<dbReference type="SUPFAM" id="SSF54211">
    <property type="entry name" value="Ribosomal protein S5 domain 2-like"/>
    <property type="match status" value="1"/>
</dbReference>
<proteinExistence type="inferred from homology"/>
<organism>
    <name type="scientific">Thermus thermophilus (strain ATCC BAA-163 / DSM 7039 / HB27)</name>
    <dbReference type="NCBI Taxonomy" id="262724"/>
    <lineage>
        <taxon>Bacteria</taxon>
        <taxon>Thermotogati</taxon>
        <taxon>Deinococcota</taxon>
        <taxon>Deinococci</taxon>
        <taxon>Thermales</taxon>
        <taxon>Thermaceae</taxon>
        <taxon>Thermus</taxon>
    </lineage>
</organism>
<evidence type="ECO:0000255" key="1">
    <source>
        <dbReference type="HAMAP-Rule" id="MF_00149"/>
    </source>
</evidence>
<evidence type="ECO:0000256" key="2">
    <source>
        <dbReference type="SAM" id="MobiDB-lite"/>
    </source>
</evidence>
<comment type="function">
    <text evidence="1">This protein is involved in the repair of mismatches in DNA. It is required for dam-dependent methyl-directed DNA mismatch repair. May act as a 'molecular matchmaker', a protein that promotes the formation of a stable complex between two or more DNA-binding proteins in an ATP-dependent manner without itself being part of a final effector complex.</text>
</comment>
<comment type="similarity">
    <text evidence="1">Belongs to the DNA mismatch repair MutL/HexB family.</text>
</comment>